<sequence>MSKKPVMLMILDGFGISPNKEGNAVAAANKPNYDRLFNKYPHTELQASGLEVGLPEGQMGNSEVGHLNIGAGRIIYQELTRITKEIKEGTFFTNKALVKAMDEAKENNTSLHLMGLLSNGGVHSHIDHLKGLLELAKKKGLQKVYVHAFMDGRDVAPSSGKEFIVELENAMKEIGVGEIATISGRYYAMDRDNRWERVELAYNAMVLGEGEKASSAVEAIEKSYHDNKTDEFVLPTVIEEDGHPVSRIKDGDSVIFFNFRPDRAREITRAIVDPEFKGFERKQLHVNFVCMTQYDKTLECVDVAYRPENYTNTLGEYVASKGLNQLRIAETEKYAHVTFFFNGGVEQPNTNEDRALIASPKVATYDLKPEMSAYEVTDELIKRLDEDKYDMIILNFANPDMVGHTGVQEAAVKAIEAVDECLGKVADKVLEKEGTLFITADHGNAEVMIDYSTGKPMTAHTSDPVPFLWISKDAEGKSLKDGGKLADIAPTMLTVMGLEVPSEMTGTCLLNK</sequence>
<name>GPMI_CLOPS</name>
<feature type="chain" id="PRO_1000063958" description="2,3-bisphosphoglycerate-independent phosphoglycerate mutase">
    <location>
        <begin position="1"/>
        <end position="512"/>
    </location>
</feature>
<feature type="active site" description="Phosphoserine intermediate" evidence="1">
    <location>
        <position position="62"/>
    </location>
</feature>
<feature type="binding site" evidence="1">
    <location>
        <position position="12"/>
    </location>
    <ligand>
        <name>Mn(2+)</name>
        <dbReference type="ChEBI" id="CHEBI:29035"/>
        <label>2</label>
    </ligand>
</feature>
<feature type="binding site" evidence="1">
    <location>
        <position position="62"/>
    </location>
    <ligand>
        <name>Mn(2+)</name>
        <dbReference type="ChEBI" id="CHEBI:29035"/>
        <label>2</label>
    </ligand>
</feature>
<feature type="binding site" evidence="1">
    <location>
        <position position="123"/>
    </location>
    <ligand>
        <name>substrate</name>
    </ligand>
</feature>
<feature type="binding site" evidence="1">
    <location>
        <begin position="153"/>
        <end position="154"/>
    </location>
    <ligand>
        <name>substrate</name>
    </ligand>
</feature>
<feature type="binding site" evidence="1">
    <location>
        <position position="185"/>
    </location>
    <ligand>
        <name>substrate</name>
    </ligand>
</feature>
<feature type="binding site" evidence="1">
    <location>
        <position position="191"/>
    </location>
    <ligand>
        <name>substrate</name>
    </ligand>
</feature>
<feature type="binding site" evidence="1">
    <location>
        <begin position="260"/>
        <end position="263"/>
    </location>
    <ligand>
        <name>substrate</name>
    </ligand>
</feature>
<feature type="binding site" evidence="1">
    <location>
        <position position="333"/>
    </location>
    <ligand>
        <name>substrate</name>
    </ligand>
</feature>
<feature type="binding site" evidence="1">
    <location>
        <position position="400"/>
    </location>
    <ligand>
        <name>Mn(2+)</name>
        <dbReference type="ChEBI" id="CHEBI:29035"/>
        <label>1</label>
    </ligand>
</feature>
<feature type="binding site" evidence="1">
    <location>
        <position position="404"/>
    </location>
    <ligand>
        <name>Mn(2+)</name>
        <dbReference type="ChEBI" id="CHEBI:29035"/>
        <label>1</label>
    </ligand>
</feature>
<feature type="binding site" evidence="1">
    <location>
        <position position="441"/>
    </location>
    <ligand>
        <name>Mn(2+)</name>
        <dbReference type="ChEBI" id="CHEBI:29035"/>
        <label>2</label>
    </ligand>
</feature>
<feature type="binding site" evidence="1">
    <location>
        <position position="442"/>
    </location>
    <ligand>
        <name>Mn(2+)</name>
        <dbReference type="ChEBI" id="CHEBI:29035"/>
        <label>2</label>
    </ligand>
</feature>
<feature type="binding site" evidence="1">
    <location>
        <position position="460"/>
    </location>
    <ligand>
        <name>Mn(2+)</name>
        <dbReference type="ChEBI" id="CHEBI:29035"/>
        <label>1</label>
    </ligand>
</feature>
<proteinExistence type="inferred from homology"/>
<dbReference type="EC" id="5.4.2.12" evidence="1"/>
<dbReference type="EMBL" id="CP000312">
    <property type="protein sequence ID" value="ABG87504.1"/>
    <property type="molecule type" value="Genomic_DNA"/>
</dbReference>
<dbReference type="RefSeq" id="WP_011592281.1">
    <property type="nucleotide sequence ID" value="NC_008262.1"/>
</dbReference>
<dbReference type="SMR" id="Q0STD7"/>
<dbReference type="KEGG" id="cpr:CPR_1298"/>
<dbReference type="UniPathway" id="UPA00109">
    <property type="reaction ID" value="UER00186"/>
</dbReference>
<dbReference type="Proteomes" id="UP000001824">
    <property type="component" value="Chromosome"/>
</dbReference>
<dbReference type="GO" id="GO:0005829">
    <property type="term" value="C:cytosol"/>
    <property type="evidence" value="ECO:0007669"/>
    <property type="project" value="TreeGrafter"/>
</dbReference>
<dbReference type="GO" id="GO:0030145">
    <property type="term" value="F:manganese ion binding"/>
    <property type="evidence" value="ECO:0007669"/>
    <property type="project" value="UniProtKB-UniRule"/>
</dbReference>
<dbReference type="GO" id="GO:0004619">
    <property type="term" value="F:phosphoglycerate mutase activity"/>
    <property type="evidence" value="ECO:0007669"/>
    <property type="project" value="UniProtKB-EC"/>
</dbReference>
<dbReference type="GO" id="GO:0006007">
    <property type="term" value="P:glucose catabolic process"/>
    <property type="evidence" value="ECO:0007669"/>
    <property type="project" value="InterPro"/>
</dbReference>
<dbReference type="GO" id="GO:0006096">
    <property type="term" value="P:glycolytic process"/>
    <property type="evidence" value="ECO:0007669"/>
    <property type="project" value="UniProtKB-UniRule"/>
</dbReference>
<dbReference type="CDD" id="cd16010">
    <property type="entry name" value="iPGM"/>
    <property type="match status" value="1"/>
</dbReference>
<dbReference type="FunFam" id="3.40.1450.10:FF:000001">
    <property type="entry name" value="2,3-bisphosphoglycerate-independent phosphoglycerate mutase"/>
    <property type="match status" value="1"/>
</dbReference>
<dbReference type="FunFam" id="3.40.720.10:FF:000001">
    <property type="entry name" value="2,3-bisphosphoglycerate-independent phosphoglycerate mutase"/>
    <property type="match status" value="1"/>
</dbReference>
<dbReference type="Gene3D" id="3.40.720.10">
    <property type="entry name" value="Alkaline Phosphatase, subunit A"/>
    <property type="match status" value="1"/>
</dbReference>
<dbReference type="Gene3D" id="3.40.1450.10">
    <property type="entry name" value="BPG-independent phosphoglycerate mutase, domain B"/>
    <property type="match status" value="1"/>
</dbReference>
<dbReference type="HAMAP" id="MF_01038">
    <property type="entry name" value="GpmI"/>
    <property type="match status" value="1"/>
</dbReference>
<dbReference type="InterPro" id="IPR017850">
    <property type="entry name" value="Alkaline_phosphatase_core_sf"/>
</dbReference>
<dbReference type="InterPro" id="IPR011258">
    <property type="entry name" value="BPG-indep_PGM_N"/>
</dbReference>
<dbReference type="InterPro" id="IPR006124">
    <property type="entry name" value="Metalloenzyme"/>
</dbReference>
<dbReference type="InterPro" id="IPR036646">
    <property type="entry name" value="PGAM_B_sf"/>
</dbReference>
<dbReference type="InterPro" id="IPR005995">
    <property type="entry name" value="Pgm_bpd_ind"/>
</dbReference>
<dbReference type="NCBIfam" id="TIGR01307">
    <property type="entry name" value="pgm_bpd_ind"/>
    <property type="match status" value="1"/>
</dbReference>
<dbReference type="PANTHER" id="PTHR31637">
    <property type="entry name" value="2,3-BISPHOSPHOGLYCERATE-INDEPENDENT PHOSPHOGLYCERATE MUTASE"/>
    <property type="match status" value="1"/>
</dbReference>
<dbReference type="PANTHER" id="PTHR31637:SF0">
    <property type="entry name" value="2,3-BISPHOSPHOGLYCERATE-INDEPENDENT PHOSPHOGLYCERATE MUTASE"/>
    <property type="match status" value="1"/>
</dbReference>
<dbReference type="Pfam" id="PF06415">
    <property type="entry name" value="iPGM_N"/>
    <property type="match status" value="1"/>
</dbReference>
<dbReference type="Pfam" id="PF01676">
    <property type="entry name" value="Metalloenzyme"/>
    <property type="match status" value="1"/>
</dbReference>
<dbReference type="PIRSF" id="PIRSF001492">
    <property type="entry name" value="IPGAM"/>
    <property type="match status" value="1"/>
</dbReference>
<dbReference type="SUPFAM" id="SSF64158">
    <property type="entry name" value="2,3-Bisphosphoglycerate-independent phosphoglycerate mutase, substrate-binding domain"/>
    <property type="match status" value="1"/>
</dbReference>
<dbReference type="SUPFAM" id="SSF53649">
    <property type="entry name" value="Alkaline phosphatase-like"/>
    <property type="match status" value="1"/>
</dbReference>
<organism>
    <name type="scientific">Clostridium perfringens (strain SM101 / Type A)</name>
    <dbReference type="NCBI Taxonomy" id="289380"/>
    <lineage>
        <taxon>Bacteria</taxon>
        <taxon>Bacillati</taxon>
        <taxon>Bacillota</taxon>
        <taxon>Clostridia</taxon>
        <taxon>Eubacteriales</taxon>
        <taxon>Clostridiaceae</taxon>
        <taxon>Clostridium</taxon>
    </lineage>
</organism>
<evidence type="ECO:0000255" key="1">
    <source>
        <dbReference type="HAMAP-Rule" id="MF_01038"/>
    </source>
</evidence>
<reference key="1">
    <citation type="journal article" date="2006" name="Genome Res.">
        <title>Skewed genomic variability in strains of the toxigenic bacterial pathogen, Clostridium perfringens.</title>
        <authorList>
            <person name="Myers G.S.A."/>
            <person name="Rasko D.A."/>
            <person name="Cheung J.K."/>
            <person name="Ravel J."/>
            <person name="Seshadri R."/>
            <person name="DeBoy R.T."/>
            <person name="Ren Q."/>
            <person name="Varga J."/>
            <person name="Awad M.M."/>
            <person name="Brinkac L.M."/>
            <person name="Daugherty S.C."/>
            <person name="Haft D.H."/>
            <person name="Dodson R.J."/>
            <person name="Madupu R."/>
            <person name="Nelson W.C."/>
            <person name="Rosovitz M.J."/>
            <person name="Sullivan S.A."/>
            <person name="Khouri H."/>
            <person name="Dimitrov G.I."/>
            <person name="Watkins K.L."/>
            <person name="Mulligan S."/>
            <person name="Benton J."/>
            <person name="Radune D."/>
            <person name="Fisher D.J."/>
            <person name="Atkins H.S."/>
            <person name="Hiscox T."/>
            <person name="Jost B.H."/>
            <person name="Billington S.J."/>
            <person name="Songer J.G."/>
            <person name="McClane B.A."/>
            <person name="Titball R.W."/>
            <person name="Rood J.I."/>
            <person name="Melville S.B."/>
            <person name="Paulsen I.T."/>
        </authorList>
    </citation>
    <scope>NUCLEOTIDE SEQUENCE [LARGE SCALE GENOMIC DNA]</scope>
    <source>
        <strain>SM101 / Type A</strain>
    </source>
</reference>
<keyword id="KW-0324">Glycolysis</keyword>
<keyword id="KW-0413">Isomerase</keyword>
<keyword id="KW-0464">Manganese</keyword>
<keyword id="KW-0479">Metal-binding</keyword>
<accession>Q0STD7</accession>
<protein>
    <recommendedName>
        <fullName evidence="1">2,3-bisphosphoglycerate-independent phosphoglycerate mutase</fullName>
        <shortName evidence="1">BPG-independent PGAM</shortName>
        <shortName evidence="1">Phosphoglyceromutase</shortName>
        <shortName evidence="1">iPGM</shortName>
        <ecNumber evidence="1">5.4.2.12</ecNumber>
    </recommendedName>
</protein>
<comment type="function">
    <text evidence="1">Catalyzes the interconversion of 2-phosphoglycerate and 3-phosphoglycerate.</text>
</comment>
<comment type="catalytic activity">
    <reaction evidence="1">
        <text>(2R)-2-phosphoglycerate = (2R)-3-phosphoglycerate</text>
        <dbReference type="Rhea" id="RHEA:15901"/>
        <dbReference type="ChEBI" id="CHEBI:58272"/>
        <dbReference type="ChEBI" id="CHEBI:58289"/>
        <dbReference type="EC" id="5.4.2.12"/>
    </reaction>
</comment>
<comment type="cofactor">
    <cofactor evidence="1">
        <name>Mn(2+)</name>
        <dbReference type="ChEBI" id="CHEBI:29035"/>
    </cofactor>
    <text evidence="1">Binds 2 manganese ions per subunit.</text>
</comment>
<comment type="pathway">
    <text evidence="1">Carbohydrate degradation; glycolysis; pyruvate from D-glyceraldehyde 3-phosphate: step 3/5.</text>
</comment>
<comment type="subunit">
    <text evidence="1">Monomer.</text>
</comment>
<comment type="similarity">
    <text evidence="1">Belongs to the BPG-independent phosphoglycerate mutase family.</text>
</comment>
<gene>
    <name evidence="1" type="primary">gpmI</name>
    <name type="ordered locus">CPR_1298</name>
</gene>